<proteinExistence type="inferred from homology"/>
<sequence length="418" mass="46794">MTQKLAILGGDPVRTRPWPEWPHVGPEDVDRLRTVIESRNLGGIPFPNTMHQQFAERFTAKLGAKYGLLATNGTVTLSMALRALGIHAGDEVITTAFTWVGTVAGIVHVNAVPVLADISDDNWCIDPVKVEEAITDRTRAIMVVHLGNQVADMDALLDICRRHNLLLIEDCAHAHFAEWRGRCVGTIGDAGSYSFETSKIMTSGEGGFLVTATEEAFHRAMSLAHVGRKEAPYDRFPGRVFGWNHRATEMQAAVLLGQLDRYDALDKQRTAMAEMLTQGLVEIGGFKPLAEDPRVTRRQRYELLFRFDTEAWDGLHRDKVLEAILAEGVEFEGNTFYPPMHRDELFHITADDWPAIRERYGEKIEPDAFHLPVAERVAFDEAVWIHHSLLSVEPEDVQDMLDAVVKVRDNLGALKKSL</sequence>
<dbReference type="EC" id="2.6.1.101"/>
<dbReference type="EMBL" id="AY524043">
    <property type="protein sequence ID" value="AAR98552.1"/>
    <property type="status" value="ALT_INIT"/>
    <property type="molecule type" value="Genomic_DNA"/>
</dbReference>
<dbReference type="EMBL" id="AJ575934">
    <property type="protein sequence ID" value="CAE06507.1"/>
    <property type="molecule type" value="Genomic_DNA"/>
</dbReference>
<dbReference type="EMBL" id="AJ628149">
    <property type="protein sequence ID" value="CAF31435.1"/>
    <property type="molecule type" value="Genomic_DNA"/>
</dbReference>
<dbReference type="SMR" id="Q70KD4"/>
<dbReference type="KEGG" id="ag:CAF31435"/>
<dbReference type="UniPathway" id="UPA00907">
    <property type="reaction ID" value="UER00924"/>
</dbReference>
<dbReference type="UniPathway" id="UPA00967"/>
<dbReference type="GO" id="GO:0030170">
    <property type="term" value="F:pyridoxal phosphate binding"/>
    <property type="evidence" value="ECO:0007669"/>
    <property type="project" value="TreeGrafter"/>
</dbReference>
<dbReference type="GO" id="GO:0008483">
    <property type="term" value="F:transaminase activity"/>
    <property type="evidence" value="ECO:0007669"/>
    <property type="project" value="UniProtKB-KW"/>
</dbReference>
<dbReference type="GO" id="GO:0017000">
    <property type="term" value="P:antibiotic biosynthetic process"/>
    <property type="evidence" value="ECO:0007669"/>
    <property type="project" value="UniProtKB-KW"/>
</dbReference>
<dbReference type="GO" id="GO:0000271">
    <property type="term" value="P:polysaccharide biosynthetic process"/>
    <property type="evidence" value="ECO:0007669"/>
    <property type="project" value="TreeGrafter"/>
</dbReference>
<dbReference type="CDD" id="cd00616">
    <property type="entry name" value="AHBA_syn"/>
    <property type="match status" value="1"/>
</dbReference>
<dbReference type="Gene3D" id="3.90.1150.10">
    <property type="entry name" value="Aspartate Aminotransferase, domain 1"/>
    <property type="match status" value="1"/>
</dbReference>
<dbReference type="Gene3D" id="3.40.640.10">
    <property type="entry name" value="Type I PLP-dependent aspartate aminotransferase-like (Major domain)"/>
    <property type="match status" value="1"/>
</dbReference>
<dbReference type="InterPro" id="IPR000653">
    <property type="entry name" value="DegT/StrS_aminotransferase"/>
</dbReference>
<dbReference type="InterPro" id="IPR015424">
    <property type="entry name" value="PyrdxlP-dep_Trfase"/>
</dbReference>
<dbReference type="InterPro" id="IPR015421">
    <property type="entry name" value="PyrdxlP-dep_Trfase_major"/>
</dbReference>
<dbReference type="InterPro" id="IPR015422">
    <property type="entry name" value="PyrdxlP-dep_Trfase_small"/>
</dbReference>
<dbReference type="PANTHER" id="PTHR30244:SF34">
    <property type="entry name" value="DTDP-4-AMINO-4,6-DIDEOXYGALACTOSE TRANSAMINASE"/>
    <property type="match status" value="1"/>
</dbReference>
<dbReference type="PANTHER" id="PTHR30244">
    <property type="entry name" value="TRANSAMINASE"/>
    <property type="match status" value="1"/>
</dbReference>
<dbReference type="Pfam" id="PF01041">
    <property type="entry name" value="DegT_DnrJ_EryC1"/>
    <property type="match status" value="1"/>
</dbReference>
<dbReference type="PIRSF" id="PIRSF000390">
    <property type="entry name" value="PLP_StrS"/>
    <property type="match status" value="1"/>
</dbReference>
<dbReference type="SUPFAM" id="SSF53383">
    <property type="entry name" value="PLP-dependent transferases"/>
    <property type="match status" value="1"/>
</dbReference>
<protein>
    <recommendedName>
        <fullName>Putative L-glutamine:3-amino-2,3-dideoxy-scyllo-inosose aminotransferase</fullName>
        <shortName>Putative L-glutamine:amino-DOI aminotransferase</shortName>
        <ecNumber>2.6.1.101</ecNumber>
    </recommendedName>
    <alternativeName>
        <fullName>Putative gentamicin aminotransferase II</fullName>
    </alternativeName>
</protein>
<keyword id="KW-0032">Aminotransferase</keyword>
<keyword id="KW-0045">Antibiotic biosynthesis</keyword>
<keyword id="KW-0663">Pyridoxal phosphate</keyword>
<keyword id="KW-0808">Transferase</keyword>
<organism>
    <name type="scientific">Micromonospora echinospora</name>
    <name type="common">Micromonospora purpurea</name>
    <dbReference type="NCBI Taxonomy" id="1877"/>
    <lineage>
        <taxon>Bacteria</taxon>
        <taxon>Bacillati</taxon>
        <taxon>Actinomycetota</taxon>
        <taxon>Actinomycetes</taxon>
        <taxon>Micromonosporales</taxon>
        <taxon>Micromonosporaceae</taxon>
        <taxon>Micromonospora</taxon>
    </lineage>
</organism>
<comment type="function">
    <text evidence="2">Catalyzes the transamination of 3-amino-2,3-dideoxy-scyllo-inosose (amino-DOI) into 2-deoxystreptamine (DOS).</text>
</comment>
<comment type="catalytic activity">
    <reaction>
        <text>3-amino-2,3-dideoxy-scyllo-inosose + L-glutamine = 2-deoxystreptamine + 2-oxoglutaramate</text>
        <dbReference type="Rhea" id="RHEA:34151"/>
        <dbReference type="ChEBI" id="CHEBI:16769"/>
        <dbReference type="ChEBI" id="CHEBI:58359"/>
        <dbReference type="ChEBI" id="CHEBI:65002"/>
        <dbReference type="ChEBI" id="CHEBI:65069"/>
        <dbReference type="EC" id="2.6.1.101"/>
    </reaction>
</comment>
<comment type="cofactor">
    <cofactor evidence="1">
        <name>pyridoxal 5'-phosphate</name>
        <dbReference type="ChEBI" id="CHEBI:597326"/>
    </cofactor>
</comment>
<comment type="pathway">
    <text>Metabolic intermediate biosynthesis; 2-deoxystreptamine biosynthesis; 2-deoxystreptamine from D-glucose 6-phosphate: step 4/4.</text>
</comment>
<comment type="pathway">
    <text>Antibiotic biosynthesis; gentamicin biosynthesis.</text>
</comment>
<comment type="similarity">
    <text evidence="2">Belongs to the DegT/DnrJ/EryC1 family. L-glutamine:2-deoxy-scyllo-inosose/scyllo-inosose aminotransferase subfamily.</text>
</comment>
<comment type="sequence caution" evidence="2">
    <conflict type="erroneous initiation">
        <sequence resource="EMBL-CDS" id="AAR98552"/>
    </conflict>
</comment>
<feature type="chain" id="PRO_0000234049" description="Putative L-glutamine:3-amino-2,3-dideoxy-scyllo-inosose aminotransferase">
    <location>
        <begin position="1"/>
        <end position="418"/>
    </location>
</feature>
<feature type="modified residue" description="N6-(pyridoxal phosphate)lysine" evidence="1">
    <location>
        <position position="199"/>
    </location>
</feature>
<reference key="1">
    <citation type="journal article" date="2004" name="J. Antibiot.">
        <title>Gene cluster in Micromonospora echinospora ATCC15835 for the biosynthesis of the gentamicin C complex.</title>
        <authorList>
            <person name="Unwin J."/>
            <person name="Standage S."/>
            <person name="Alexander D."/>
            <person name="Hosted T. Jr."/>
            <person name="Horan A.C."/>
            <person name="Wellington E.M."/>
        </authorList>
    </citation>
    <scope>NUCLEOTIDE SEQUENCE [GENOMIC DNA]</scope>
    <source>
        <strain>ATCC 15835 / DSM 43036 / BCRC 11561 / JCM 3074 / NBRC 12575 / NCIMB 12882 / NRRL 2953</strain>
    </source>
</reference>
<reference key="2">
    <citation type="journal article" date="2004" name="Mol. Cells">
        <title>Molecular cloning and characterization of a 2-deoxystreptamine biosynthetic gene cluster in gentamicin-producing Micromonospora echinospora ATCC15835.</title>
        <authorList>
            <person name="Kharel M.K."/>
            <person name="Basnet D.B."/>
            <person name="Lee H.C."/>
            <person name="Liou K."/>
            <person name="Moon Y.H."/>
            <person name="Kim J.-J."/>
            <person name="Woo J.S."/>
            <person name="Sohng J.K."/>
        </authorList>
    </citation>
    <scope>NUCLEOTIDE SEQUENCE [GENOMIC DNA]</scope>
    <source>
        <strain>ATCC 15835 / DSM 43036 / BCRC 11561 / JCM 3074 / NBRC 12575 / NCIMB 12882 / NRRL 2953</strain>
    </source>
</reference>
<reference key="3">
    <citation type="submission" date="2004-02" db="EMBL/GenBank/DDBJ databases">
        <title>Cloning and sequencing of the gentamicin biosynthetic gene cluster from Micromonospora echinospora DSM 43036.</title>
        <authorList>
            <person name="Aboshanab K.M.A."/>
            <person name="Schmidt-Beissner H."/>
            <person name="Wehmeier U.F."/>
            <person name="Welzel K."/>
            <person name="Vente A."/>
            <person name="Piepersberg W."/>
        </authorList>
    </citation>
    <scope>NUCLEOTIDE SEQUENCE [GENOMIC DNA]</scope>
    <source>
        <strain>ATCC 15835 / DSM 43036 / BCRC 11561 / JCM 3074 / NBRC 12575 / NCIMB 12882 / NRRL 2953</strain>
    </source>
</reference>
<evidence type="ECO:0000250" key="1"/>
<evidence type="ECO:0000305" key="2"/>
<name>GLADA_MICEC</name>
<gene>
    <name type="primary">gtmD</name>
    <name type="synonym">genS2</name>
    <name type="synonym">gntF</name>
</gene>
<accession>Q70KD4</accession>
<accession>Q6QVT9</accession>